<comment type="function">
    <text evidence="1">Key regulator of transforming growth factor beta (TGFB1, TGFB2 and TGFB3) that controls TGF-beta activation by maintaining it in a latent state during storage in extracellular space. Associates specifically via disulfide bonds with the Latency-associated peptide (LAP), which is the regulatory chain of TGF-beta, and regulates integrin-dependent activation of TGF-beta.</text>
</comment>
<comment type="subunit">
    <text evidence="10 12">Forms part of the large latent transforming growth factor beta precursor complex; removal is essential for activation of complex (PubMed:9660815). Interacts with LTBP1 and TGFB1 (PubMed:9660815). Interacts with EFEMP2; this interaction promotes fibrillar deposition of EFEMP2 (PubMed:27339457).</text>
</comment>
<comment type="interaction">
    <interactant intactId="EBI-947718">
        <id>Q8N2S1</id>
    </interactant>
    <interactant intactId="EBI-708350">
        <id>O15265</id>
        <label>ATXN7</label>
    </interactant>
    <organismsDiffer>false</organismsDiffer>
    <experiments>2</experiments>
</comment>
<comment type="interaction">
    <interactant intactId="EBI-947718">
        <id>Q8N2S1</id>
    </interactant>
    <interactant intactId="EBI-766279">
        <id>O00555</id>
        <label>CACNA1A</label>
    </interactant>
    <organismsDiffer>false</organismsDiffer>
    <experiments>2</experiments>
</comment>
<comment type="subcellular location">
    <subcellularLocation>
        <location evidence="6 12">Secreted</location>
        <location evidence="6 12">Extracellular space</location>
        <location evidence="6 12">Extracellular matrix</location>
    </subcellularLocation>
</comment>
<comment type="alternative products">
    <event type="alternative splicing"/>
    <isoform>
        <id>Q8N2S1-1</id>
        <name>1</name>
        <name>LTBP-4L</name>
        <sequence type="displayed"/>
    </isoform>
    <isoform>
        <id>Q8N2S1-2</id>
        <name>2</name>
        <name>LTBP-4S</name>
        <sequence type="described" ref="VSP_029364 VSP_029365"/>
    </isoform>
    <isoform>
        <id>Q8N2S1-3</id>
        <name>3</name>
        <sequence type="described" ref="VSP_029363"/>
    </isoform>
    <isoform>
        <id>Q8N2S1-4</id>
        <name>4</name>
        <sequence type="described" ref="VSP_029362 VSP_029366 VSP_029367"/>
    </isoform>
</comment>
<comment type="tissue specificity">
    <text evidence="11 12">Highly expressed in heart, skeletal muscle, pancreas, uterus, and small intestine. Weakly expressed in placenta and lung.</text>
</comment>
<comment type="developmental stage">
    <text evidence="12">Very low expression in fetal brain, liver, heart, spleen and thymus.</text>
</comment>
<comment type="PTM">
    <text evidence="1">Contains hydroxylated asparagine residues.</text>
</comment>
<comment type="disease" evidence="7">
    <disease id="DI-02872">
        <name>Urban-Rifkin-Davis syndrome</name>
        <acronym>URDS</acronym>
        <description>A syndrome characterized by disrupted pulmonary, gastrointestinal, urinary, musculoskeletal, craniofacial and dermal development. Clinical features include cutis laxa, mild cardiovascular lesions, respiratory distress with cystic and atelectatic changes in the lungs, and diverticulosis, tortuosity and stenosis at various levels of the intestinal tract. Craniofacial features include microretrognathia, flat midface, receding forehead and wide fontanelles.</description>
        <dbReference type="MIM" id="613177"/>
    </disease>
    <text>The disease is caused by variants affecting the gene represented in this entry.</text>
</comment>
<comment type="disease" evidence="8 9">
    <disease id="DI-01509">
        <name>Duchenne muscular dystrophy</name>
        <acronym>DMD</acronym>
        <description>Most common form of muscular dystrophy; a sex-linked recessive disorder. It typically presents in boys aged 3 to 7 year as proximal muscle weakness causing waddling gait, toe-walking, lordosis, frequent falls, and difficulty in standing up and climbing up stairs. The pelvic girdle is affected first, then the shoulder girdle. Progression is steady and most patients are confined to a wheelchair by age of 10 or 12. Flexion contractures and scoliosis ultimately occur. About 50% of patients have a lower IQ than their genetic expectations would suggest. There is no treatment.</description>
        <dbReference type="MIM" id="310200"/>
    </disease>
    <text evidence="8">The gene represented in this entry may act as a disease modifier. DMD patients homozygous for the IAAM haplotype consisting of Ile-194, Ala-787, Ala-820 and Met-1141 remain ambulatory significantly longer than those heterozygous or homozygous for the VTTT haplotype consisting of Val-194, Thr-787, Thr-820 and Thr-1141. This may be due to increased binding to TGFB1, resulting in TGFB1 sequestration in the extracellular matrix and reduced TGFB1 signaling which has been linked to improved muscle function and regeneration.</text>
</comment>
<comment type="similarity">
    <text evidence="16">Belongs to the LTBP family.</text>
</comment>
<keyword id="KW-0025">Alternative splicing</keyword>
<keyword id="KW-0225">Disease variant</keyword>
<keyword id="KW-1015">Disulfide bond</keyword>
<keyword id="KW-0245">EGF-like domain</keyword>
<keyword id="KW-0272">Extracellular matrix</keyword>
<keyword id="KW-0325">Glycoprotein</keyword>
<keyword id="KW-0340">Growth factor binding</keyword>
<keyword id="KW-1267">Proteomics identification</keyword>
<keyword id="KW-1185">Reference proteome</keyword>
<keyword id="KW-0677">Repeat</keyword>
<keyword id="KW-0964">Secreted</keyword>
<keyword id="KW-0732">Signal</keyword>
<protein>
    <recommendedName>
        <fullName>Latent-transforming growth factor beta-binding protein 4</fullName>
        <shortName>LTBP-4</shortName>
    </recommendedName>
</protein>
<accession>Q8N2S1</accession>
<accession>O00508</accession>
<accession>O75412</accession>
<accession>O75413</accession>
<dbReference type="EMBL" id="Y13622">
    <property type="protein sequence ID" value="CAA73944.1"/>
    <property type="molecule type" value="mRNA"/>
</dbReference>
<dbReference type="EMBL" id="AF051344">
    <property type="protein sequence ID" value="AAC39879.2"/>
    <property type="molecule type" value="mRNA"/>
</dbReference>
<dbReference type="EMBL" id="AF051345">
    <property type="protein sequence ID" value="AAC39880.2"/>
    <property type="molecule type" value="mRNA"/>
</dbReference>
<dbReference type="EMBL" id="AK074499">
    <property type="protein sequence ID" value="BAC11024.1"/>
    <property type="molecule type" value="mRNA"/>
</dbReference>
<dbReference type="EMBL" id="AC010412">
    <property type="status" value="NOT_ANNOTATED_CDS"/>
    <property type="molecule type" value="Genomic_DNA"/>
</dbReference>
<dbReference type="CCDS" id="CCDS74368.1">
    <molecule id="Q8N2S1-3"/>
</dbReference>
<dbReference type="CCDS" id="CCDS74369.1">
    <molecule id="Q8N2S1-1"/>
</dbReference>
<dbReference type="CCDS" id="CCDS74370.1">
    <molecule id="Q8N2S1-2"/>
</dbReference>
<dbReference type="RefSeq" id="NP_001036009.1">
    <molecule id="Q8N2S1-1"/>
    <property type="nucleotide sequence ID" value="NM_001042544.1"/>
</dbReference>
<dbReference type="RefSeq" id="NP_001036010.1">
    <molecule id="Q8N2S1-2"/>
    <property type="nucleotide sequence ID" value="NM_001042545.2"/>
</dbReference>
<dbReference type="RefSeq" id="NP_003564.2">
    <property type="nucleotide sequence ID" value="NM_003573.2"/>
</dbReference>
<dbReference type="BioGRID" id="114009">
    <property type="interactions" value="87"/>
</dbReference>
<dbReference type="CORUM" id="Q8N2S1"/>
<dbReference type="FunCoup" id="Q8N2S1">
    <property type="interactions" value="550"/>
</dbReference>
<dbReference type="IntAct" id="Q8N2S1">
    <property type="interactions" value="75"/>
</dbReference>
<dbReference type="MINT" id="Q8N2S1"/>
<dbReference type="STRING" id="9606.ENSP00000311905"/>
<dbReference type="CarbonylDB" id="Q8N2S1"/>
<dbReference type="GlyCosmos" id="Q8N2S1">
    <property type="glycosylation" value="17 sites, 3 glycans"/>
</dbReference>
<dbReference type="GlyGen" id="Q8N2S1">
    <property type="glycosylation" value="26 sites, 11 N-linked glycans (3 sites), 5 O-linked glycans (20 sites)"/>
</dbReference>
<dbReference type="iPTMnet" id="Q8N2S1"/>
<dbReference type="PhosphoSitePlus" id="Q8N2S1"/>
<dbReference type="BioMuta" id="LTBP4"/>
<dbReference type="DMDM" id="160410003"/>
<dbReference type="jPOST" id="Q8N2S1"/>
<dbReference type="MassIVE" id="Q8N2S1"/>
<dbReference type="PaxDb" id="9606-ENSP00000311905"/>
<dbReference type="PeptideAtlas" id="Q8N2S1"/>
<dbReference type="ProteomicsDB" id="71731">
    <molecule id="Q8N2S1-1"/>
</dbReference>
<dbReference type="ProteomicsDB" id="71732">
    <molecule id="Q8N2S1-2"/>
</dbReference>
<dbReference type="ProteomicsDB" id="71733">
    <molecule id="Q8N2S1-3"/>
</dbReference>
<dbReference type="ProteomicsDB" id="71734">
    <molecule id="Q8N2S1-4"/>
</dbReference>
<dbReference type="Antibodypedia" id="4199">
    <property type="antibodies" value="80 antibodies from 17 providers"/>
</dbReference>
<dbReference type="DNASU" id="8425"/>
<dbReference type="Ensembl" id="ENST00000308370.11">
    <molecule id="Q8N2S1-1"/>
    <property type="protein sequence ID" value="ENSP00000311905.8"/>
    <property type="gene ID" value="ENSG00000090006.18"/>
</dbReference>
<dbReference type="Ensembl" id="ENST00000396819.8">
    <molecule id="Q8N2S1-2"/>
    <property type="protein sequence ID" value="ENSP00000380031.5"/>
    <property type="gene ID" value="ENSG00000090006.18"/>
</dbReference>
<dbReference type="GeneID" id="8425"/>
<dbReference type="KEGG" id="hsa:8425"/>
<dbReference type="MANE-Select" id="ENST00000396819.8">
    <molecule id="Q8N2S1-2"/>
    <property type="protein sequence ID" value="ENSP00000380031.5"/>
    <property type="RefSeq nucleotide sequence ID" value="NM_001042545.2"/>
    <property type="RefSeq protein sequence ID" value="NP_001036010.1"/>
</dbReference>
<dbReference type="UCSC" id="uc032hxp.2">
    <molecule id="Q8N2S1-1"/>
    <property type="organism name" value="human"/>
</dbReference>
<dbReference type="AGR" id="HGNC:6717"/>
<dbReference type="CTD" id="8425"/>
<dbReference type="DisGeNET" id="8425"/>
<dbReference type="GeneCards" id="LTBP4"/>
<dbReference type="GeneReviews" id="LTBP4"/>
<dbReference type="HGNC" id="HGNC:6717">
    <property type="gene designation" value="LTBP4"/>
</dbReference>
<dbReference type="HPA" id="ENSG00000090006">
    <property type="expression patterns" value="Low tissue specificity"/>
</dbReference>
<dbReference type="MalaCards" id="LTBP4"/>
<dbReference type="MIM" id="310200">
    <property type="type" value="phenotype"/>
</dbReference>
<dbReference type="MIM" id="604710">
    <property type="type" value="gene"/>
</dbReference>
<dbReference type="MIM" id="613177">
    <property type="type" value="phenotype"/>
</dbReference>
<dbReference type="neXtProt" id="NX_Q8N2S1"/>
<dbReference type="OpenTargets" id="ENSG00000090006"/>
<dbReference type="Orphanet" id="221145">
    <property type="disease" value="Cutis laxa with severe pulmonary, gastrointestinal and urinary anomalies"/>
</dbReference>
<dbReference type="Orphanet" id="98896">
    <property type="disease" value="Duchenne muscular dystrophy"/>
</dbReference>
<dbReference type="PharmGKB" id="PA30480"/>
<dbReference type="VEuPathDB" id="HostDB:ENSG00000090006"/>
<dbReference type="eggNOG" id="KOG1217">
    <property type="taxonomic scope" value="Eukaryota"/>
</dbReference>
<dbReference type="GeneTree" id="ENSGT00940000158234"/>
<dbReference type="InParanoid" id="Q8N2S1"/>
<dbReference type="OMA" id="NHAGICE"/>
<dbReference type="OrthoDB" id="10045365at2759"/>
<dbReference type="PAN-GO" id="Q8N2S1">
    <property type="GO annotations" value="1 GO annotation based on evolutionary models"/>
</dbReference>
<dbReference type="PhylomeDB" id="Q8N2S1"/>
<dbReference type="TreeFam" id="TF317514"/>
<dbReference type="PathwayCommons" id="Q8N2S1"/>
<dbReference type="Reactome" id="R-HSA-2129379">
    <property type="pathway name" value="Molecules associated with elastic fibres"/>
</dbReference>
<dbReference type="Reactome" id="R-HSA-2173789">
    <property type="pathway name" value="TGF-beta receptor signaling activates SMADs"/>
</dbReference>
<dbReference type="SignaLink" id="Q8N2S1"/>
<dbReference type="BioGRID-ORCS" id="8425">
    <property type="hits" value="7 hits in 323 CRISPR screens"/>
</dbReference>
<dbReference type="ChiTaRS" id="LTBP4">
    <property type="organism name" value="human"/>
</dbReference>
<dbReference type="GenomeRNAi" id="8425"/>
<dbReference type="Pharos" id="Q8N2S1">
    <property type="development level" value="Tbio"/>
</dbReference>
<dbReference type="PRO" id="PR:Q8N2S1"/>
<dbReference type="Proteomes" id="UP000005640">
    <property type="component" value="Chromosome 19"/>
</dbReference>
<dbReference type="RNAct" id="Q8N2S1">
    <property type="molecule type" value="protein"/>
</dbReference>
<dbReference type="Bgee" id="ENSG00000090006">
    <property type="expression patterns" value="Expressed in tibial nerve and 177 other cell types or tissues"/>
</dbReference>
<dbReference type="ExpressionAtlas" id="Q8N2S1">
    <property type="expression patterns" value="baseline and differential"/>
</dbReference>
<dbReference type="GO" id="GO:0062023">
    <property type="term" value="C:collagen-containing extracellular matrix"/>
    <property type="evidence" value="ECO:0000314"/>
    <property type="project" value="UniProtKB"/>
</dbReference>
<dbReference type="GO" id="GO:0031012">
    <property type="term" value="C:extracellular matrix"/>
    <property type="evidence" value="ECO:0000314"/>
    <property type="project" value="UniProtKB"/>
</dbReference>
<dbReference type="GO" id="GO:0005576">
    <property type="term" value="C:extracellular region"/>
    <property type="evidence" value="ECO:0007005"/>
    <property type="project" value="BHF-UCL"/>
</dbReference>
<dbReference type="GO" id="GO:0005615">
    <property type="term" value="C:extracellular space"/>
    <property type="evidence" value="ECO:0007005"/>
    <property type="project" value="BHF-UCL"/>
</dbReference>
<dbReference type="GO" id="GO:0001527">
    <property type="term" value="C:microfibril"/>
    <property type="evidence" value="ECO:0000250"/>
    <property type="project" value="UniProtKB"/>
</dbReference>
<dbReference type="GO" id="GO:0005509">
    <property type="term" value="F:calcium ion binding"/>
    <property type="evidence" value="ECO:0000304"/>
    <property type="project" value="ProtInc"/>
</dbReference>
<dbReference type="GO" id="GO:0005539">
    <property type="term" value="F:glycosaminoglycan binding"/>
    <property type="evidence" value="ECO:0000303"/>
    <property type="project" value="UniProtKB"/>
</dbReference>
<dbReference type="GO" id="GO:0005178">
    <property type="term" value="F:integrin binding"/>
    <property type="evidence" value="ECO:0000303"/>
    <property type="project" value="UniProtKB"/>
</dbReference>
<dbReference type="GO" id="GO:0050431">
    <property type="term" value="F:transforming growth factor beta binding"/>
    <property type="evidence" value="ECO:0000314"/>
    <property type="project" value="UniProtKB"/>
</dbReference>
<dbReference type="GO" id="GO:0005024">
    <property type="term" value="F:transforming growth factor beta receptor activity"/>
    <property type="evidence" value="ECO:0000303"/>
    <property type="project" value="UniProtKB"/>
</dbReference>
<dbReference type="GO" id="GO:0048251">
    <property type="term" value="P:elastic fiber assembly"/>
    <property type="evidence" value="ECO:0000250"/>
    <property type="project" value="UniProtKB"/>
</dbReference>
<dbReference type="GO" id="GO:0046879">
    <property type="term" value="P:hormone secretion"/>
    <property type="evidence" value="ECO:0007669"/>
    <property type="project" value="Ensembl"/>
</dbReference>
<dbReference type="GO" id="GO:0006457">
    <property type="term" value="P:protein folding"/>
    <property type="evidence" value="ECO:0000304"/>
    <property type="project" value="UniProtKB"/>
</dbReference>
<dbReference type="GO" id="GO:0001558">
    <property type="term" value="P:regulation of cell growth"/>
    <property type="evidence" value="ECO:0000304"/>
    <property type="project" value="UniProtKB"/>
</dbReference>
<dbReference type="GO" id="GO:0017015">
    <property type="term" value="P:regulation of transforming growth factor beta receptor signaling pathway"/>
    <property type="evidence" value="ECO:0000304"/>
    <property type="project" value="UniProtKB"/>
</dbReference>
<dbReference type="GO" id="GO:0007179">
    <property type="term" value="P:transforming growth factor beta receptor signaling pathway"/>
    <property type="evidence" value="ECO:0007669"/>
    <property type="project" value="Ensembl"/>
</dbReference>
<dbReference type="CDD" id="cd00054">
    <property type="entry name" value="EGF_CA"/>
    <property type="match status" value="13"/>
</dbReference>
<dbReference type="FunFam" id="2.10.25.10:FF:000194">
    <property type="entry name" value="Latent transforming growth factor beta binding protein 2"/>
    <property type="match status" value="1"/>
</dbReference>
<dbReference type="FunFam" id="2.10.25.10:FF:000539">
    <property type="entry name" value="Latent transforming growth factor beta binding protein 4"/>
    <property type="match status" value="1"/>
</dbReference>
<dbReference type="FunFam" id="3.90.290.10:FF:000004">
    <property type="entry name" value="latent-transforming growth factor beta-binding protein 1 isoform X1"/>
    <property type="match status" value="1"/>
</dbReference>
<dbReference type="FunFam" id="2.10.25.10:FF:000046">
    <property type="entry name" value="Latent-transforming growth factor beta-binding protein 1 isoform x2"/>
    <property type="match status" value="1"/>
</dbReference>
<dbReference type="FunFam" id="3.90.290.10:FF:000001">
    <property type="entry name" value="Latent-transforming growth factor beta-binding protein 3 isoform 1"/>
    <property type="match status" value="1"/>
</dbReference>
<dbReference type="FunFam" id="2.10.25.10:FF:000056">
    <property type="entry name" value="Latent-transforming growth factor beta-binding protein 3 isoform 2"/>
    <property type="match status" value="1"/>
</dbReference>
<dbReference type="FunFam" id="2.10.25.10:FF:000679">
    <property type="entry name" value="Latent-transforming growth factor beta-binding protein 4"/>
    <property type="match status" value="1"/>
</dbReference>
<dbReference type="FunFam" id="2.10.25.10:FF:000017">
    <property type="entry name" value="latent-transforming growth factor beta-binding protein 4 isoform X1"/>
    <property type="match status" value="8"/>
</dbReference>
<dbReference type="FunFam" id="2.10.25.10:FF:000197">
    <property type="entry name" value="latent-transforming growth factor beta-binding protein 4 isoform X1"/>
    <property type="match status" value="1"/>
</dbReference>
<dbReference type="FunFam" id="2.10.25.10:FF:000218">
    <property type="entry name" value="latent-transforming growth factor beta-binding protein 4 isoform X1"/>
    <property type="match status" value="1"/>
</dbReference>
<dbReference type="FunFam" id="2.10.25.10:FF:000343">
    <property type="entry name" value="latent-transforming growth factor beta-binding protein 4 isoform X1"/>
    <property type="match status" value="1"/>
</dbReference>
<dbReference type="FunFam" id="3.90.290.10:FF:000016">
    <property type="entry name" value="latent-transforming growth factor beta-binding protein 4 isoform X1"/>
    <property type="match status" value="1"/>
</dbReference>
<dbReference type="FunFam" id="2.10.25.10:FF:000115">
    <property type="entry name" value="latent-transforming growth factor beta-binding protein 4 isoform X2"/>
    <property type="match status" value="1"/>
</dbReference>
<dbReference type="FunFam" id="2.10.25.10:FF:000160">
    <property type="entry name" value="latent-transforming growth factor beta-binding protein 4 isoform X2"/>
    <property type="match status" value="1"/>
</dbReference>
<dbReference type="FunFam" id="3.90.290.10:FF:000017">
    <property type="entry name" value="latent-transforming growth factor beta-binding protein 4 isoform X2"/>
    <property type="match status" value="1"/>
</dbReference>
<dbReference type="Gene3D" id="2.10.25.10">
    <property type="entry name" value="Laminin"/>
    <property type="match status" value="20"/>
</dbReference>
<dbReference type="Gene3D" id="3.90.290.10">
    <property type="entry name" value="TGF-beta binding (TB) domain"/>
    <property type="match status" value="4"/>
</dbReference>
<dbReference type="InterPro" id="IPR050751">
    <property type="entry name" value="ECM_structural_protein"/>
</dbReference>
<dbReference type="InterPro" id="IPR001881">
    <property type="entry name" value="EGF-like_Ca-bd_dom"/>
</dbReference>
<dbReference type="InterPro" id="IPR013032">
    <property type="entry name" value="EGF-like_CS"/>
</dbReference>
<dbReference type="InterPro" id="IPR000742">
    <property type="entry name" value="EGF-like_dom"/>
</dbReference>
<dbReference type="InterPro" id="IPR000152">
    <property type="entry name" value="EGF-type_Asp/Asn_hydroxyl_site"/>
</dbReference>
<dbReference type="InterPro" id="IPR018097">
    <property type="entry name" value="EGF_Ca-bd_CS"/>
</dbReference>
<dbReference type="InterPro" id="IPR009030">
    <property type="entry name" value="Growth_fac_rcpt_cys_sf"/>
</dbReference>
<dbReference type="InterPro" id="IPR049883">
    <property type="entry name" value="NOTCH1_EGF-like"/>
</dbReference>
<dbReference type="InterPro" id="IPR017878">
    <property type="entry name" value="TB_dom"/>
</dbReference>
<dbReference type="InterPro" id="IPR036773">
    <property type="entry name" value="TB_dom_sf"/>
</dbReference>
<dbReference type="PANTHER" id="PTHR24034">
    <property type="entry name" value="EGF-LIKE DOMAIN-CONTAINING PROTEIN"/>
    <property type="match status" value="1"/>
</dbReference>
<dbReference type="PANTHER" id="PTHR24034:SF194">
    <property type="entry name" value="LATENT-TRANSFORMING GROWTH FACTOR BETA-BINDING PROTEIN 4"/>
    <property type="match status" value="1"/>
</dbReference>
<dbReference type="Pfam" id="PF07645">
    <property type="entry name" value="EGF_CA"/>
    <property type="match status" value="17"/>
</dbReference>
<dbReference type="Pfam" id="PF12661">
    <property type="entry name" value="hEGF"/>
    <property type="match status" value="1"/>
</dbReference>
<dbReference type="Pfam" id="PF00683">
    <property type="entry name" value="TB"/>
    <property type="match status" value="3"/>
</dbReference>
<dbReference type="SMART" id="SM00181">
    <property type="entry name" value="EGF"/>
    <property type="match status" value="20"/>
</dbReference>
<dbReference type="SMART" id="SM00179">
    <property type="entry name" value="EGF_CA"/>
    <property type="match status" value="19"/>
</dbReference>
<dbReference type="SUPFAM" id="SSF57196">
    <property type="entry name" value="EGF/Laminin"/>
    <property type="match status" value="4"/>
</dbReference>
<dbReference type="SUPFAM" id="SSF57184">
    <property type="entry name" value="Growth factor receptor domain"/>
    <property type="match status" value="6"/>
</dbReference>
<dbReference type="SUPFAM" id="SSF57581">
    <property type="entry name" value="TB module/8-cys domain"/>
    <property type="match status" value="4"/>
</dbReference>
<dbReference type="PROSITE" id="PS00010">
    <property type="entry name" value="ASX_HYDROXYL"/>
    <property type="match status" value="14"/>
</dbReference>
<dbReference type="PROSITE" id="PS00022">
    <property type="entry name" value="EGF_1"/>
    <property type="match status" value="2"/>
</dbReference>
<dbReference type="PROSITE" id="PS01186">
    <property type="entry name" value="EGF_2"/>
    <property type="match status" value="12"/>
</dbReference>
<dbReference type="PROSITE" id="PS50026">
    <property type="entry name" value="EGF_3"/>
    <property type="match status" value="15"/>
</dbReference>
<dbReference type="PROSITE" id="PS01187">
    <property type="entry name" value="EGF_CA"/>
    <property type="match status" value="17"/>
</dbReference>
<dbReference type="PROSITE" id="PS51364">
    <property type="entry name" value="TB"/>
    <property type="match status" value="4"/>
</dbReference>
<name>LTBP4_HUMAN</name>
<reference key="1">
    <citation type="journal article" date="1997" name="FEBS Lett.">
        <title>Sequence and expression of a novel member (LTBP-4) of the family of latent transforming growth factor-beta binding proteins.</title>
        <authorList>
            <person name="Giltay R."/>
            <person name="Kostka G."/>
            <person name="Timpl R."/>
        </authorList>
    </citation>
    <scope>NUCLEOTIDE SEQUENCE [MRNA] (ISOFORM 3)</scope>
    <scope>TISSUE SPECIFICITY</scope>
    <scope>VARIANT MET-1141</scope>
</reference>
<reference key="2">
    <citation type="journal article" date="1998" name="J. Biol. Chem.">
        <title>Identification and characterization of a new latent transforming growth factor-beta-binding protein, LTBP-4.</title>
        <authorList>
            <person name="Saharinen J."/>
            <person name="Taipale J."/>
            <person name="Monni O."/>
            <person name="Keski-Oja J."/>
        </authorList>
    </citation>
    <scope>NUCLEOTIDE SEQUENCE [MRNA] (ISOFORMS 1 AND 2)</scope>
    <scope>SUBCELLULAR LOCATION</scope>
    <scope>ALTERNATIVE SPLICING</scope>
    <scope>TISSUE SPECIFICITY</scope>
    <scope>DEVELOPMENTAL STAGE</scope>
    <scope>INTERACTION WITH LTBP1 AND TGFB1</scope>
    <scope>VARIANTS ILE-194; ALA-787; ALA-820 AND MET-1141</scope>
    <source>
        <tissue>Heart</tissue>
    </source>
</reference>
<reference key="3">
    <citation type="journal article" date="2004" name="Nat. Genet.">
        <title>Complete sequencing and characterization of 21,243 full-length human cDNAs.</title>
        <authorList>
            <person name="Ota T."/>
            <person name="Suzuki Y."/>
            <person name="Nishikawa T."/>
            <person name="Otsuki T."/>
            <person name="Sugiyama T."/>
            <person name="Irie R."/>
            <person name="Wakamatsu A."/>
            <person name="Hayashi K."/>
            <person name="Sato H."/>
            <person name="Nagai K."/>
            <person name="Kimura K."/>
            <person name="Makita H."/>
            <person name="Sekine M."/>
            <person name="Obayashi M."/>
            <person name="Nishi T."/>
            <person name="Shibahara T."/>
            <person name="Tanaka T."/>
            <person name="Ishii S."/>
            <person name="Yamamoto J."/>
            <person name="Saito K."/>
            <person name="Kawai Y."/>
            <person name="Isono Y."/>
            <person name="Nakamura Y."/>
            <person name="Nagahari K."/>
            <person name="Murakami K."/>
            <person name="Yasuda T."/>
            <person name="Iwayanagi T."/>
            <person name="Wagatsuma M."/>
            <person name="Shiratori A."/>
            <person name="Sudo H."/>
            <person name="Hosoiri T."/>
            <person name="Kaku Y."/>
            <person name="Kodaira H."/>
            <person name="Kondo H."/>
            <person name="Sugawara M."/>
            <person name="Takahashi M."/>
            <person name="Kanda K."/>
            <person name="Yokoi T."/>
            <person name="Furuya T."/>
            <person name="Kikkawa E."/>
            <person name="Omura Y."/>
            <person name="Abe K."/>
            <person name="Kamihara K."/>
            <person name="Katsuta N."/>
            <person name="Sato K."/>
            <person name="Tanikawa M."/>
            <person name="Yamazaki M."/>
            <person name="Ninomiya K."/>
            <person name="Ishibashi T."/>
            <person name="Yamashita H."/>
            <person name="Murakawa K."/>
            <person name="Fujimori K."/>
            <person name="Tanai H."/>
            <person name="Kimata M."/>
            <person name="Watanabe M."/>
            <person name="Hiraoka S."/>
            <person name="Chiba Y."/>
            <person name="Ishida S."/>
            <person name="Ono Y."/>
            <person name="Takiguchi S."/>
            <person name="Watanabe S."/>
            <person name="Yosida M."/>
            <person name="Hotuta T."/>
            <person name="Kusano J."/>
            <person name="Kanehori K."/>
            <person name="Takahashi-Fujii A."/>
            <person name="Hara H."/>
            <person name="Tanase T.-O."/>
            <person name="Nomura Y."/>
            <person name="Togiya S."/>
            <person name="Komai F."/>
            <person name="Hara R."/>
            <person name="Takeuchi K."/>
            <person name="Arita M."/>
            <person name="Imose N."/>
            <person name="Musashino K."/>
            <person name="Yuuki H."/>
            <person name="Oshima A."/>
            <person name="Sasaki N."/>
            <person name="Aotsuka S."/>
            <person name="Yoshikawa Y."/>
            <person name="Matsunawa H."/>
            <person name="Ichihara T."/>
            <person name="Shiohata N."/>
            <person name="Sano S."/>
            <person name="Moriya S."/>
            <person name="Momiyama H."/>
            <person name="Satoh N."/>
            <person name="Takami S."/>
            <person name="Terashima Y."/>
            <person name="Suzuki O."/>
            <person name="Nakagawa S."/>
            <person name="Senoh A."/>
            <person name="Mizoguchi H."/>
            <person name="Goto Y."/>
            <person name="Shimizu F."/>
            <person name="Wakebe H."/>
            <person name="Hishigaki H."/>
            <person name="Watanabe T."/>
            <person name="Sugiyama A."/>
            <person name="Takemoto M."/>
            <person name="Kawakami B."/>
            <person name="Yamazaki M."/>
            <person name="Watanabe K."/>
            <person name="Kumagai A."/>
            <person name="Itakura S."/>
            <person name="Fukuzumi Y."/>
            <person name="Fujimori Y."/>
            <person name="Komiyama M."/>
            <person name="Tashiro H."/>
            <person name="Tanigami A."/>
            <person name="Fujiwara T."/>
            <person name="Ono T."/>
            <person name="Yamada K."/>
            <person name="Fujii Y."/>
            <person name="Ozaki K."/>
            <person name="Hirao M."/>
            <person name="Ohmori Y."/>
            <person name="Kawabata A."/>
            <person name="Hikiji T."/>
            <person name="Kobatake N."/>
            <person name="Inagaki H."/>
            <person name="Ikema Y."/>
            <person name="Okamoto S."/>
            <person name="Okitani R."/>
            <person name="Kawakami T."/>
            <person name="Noguchi S."/>
            <person name="Itoh T."/>
            <person name="Shigeta K."/>
            <person name="Senba T."/>
            <person name="Matsumura K."/>
            <person name="Nakajima Y."/>
            <person name="Mizuno T."/>
            <person name="Morinaga M."/>
            <person name="Sasaki M."/>
            <person name="Togashi T."/>
            <person name="Oyama M."/>
            <person name="Hata H."/>
            <person name="Watanabe M."/>
            <person name="Komatsu T."/>
            <person name="Mizushima-Sugano J."/>
            <person name="Satoh T."/>
            <person name="Shirai Y."/>
            <person name="Takahashi Y."/>
            <person name="Nakagawa K."/>
            <person name="Okumura K."/>
            <person name="Nagase T."/>
            <person name="Nomura N."/>
            <person name="Kikuchi H."/>
            <person name="Masuho Y."/>
            <person name="Yamashita R."/>
            <person name="Nakai K."/>
            <person name="Yada T."/>
            <person name="Nakamura Y."/>
            <person name="Ohara O."/>
            <person name="Isogai T."/>
            <person name="Sugano S."/>
        </authorList>
    </citation>
    <scope>NUCLEOTIDE SEQUENCE [LARGE SCALE MRNA] (ISOFORM 4)</scope>
    <source>
        <tissue>Embryo</tissue>
    </source>
</reference>
<reference key="4">
    <citation type="journal article" date="2004" name="Nature">
        <title>The DNA sequence and biology of human chromosome 19.</title>
        <authorList>
            <person name="Grimwood J."/>
            <person name="Gordon L.A."/>
            <person name="Olsen A.S."/>
            <person name="Terry A."/>
            <person name="Schmutz J."/>
            <person name="Lamerdin J.E."/>
            <person name="Hellsten U."/>
            <person name="Goodstein D."/>
            <person name="Couronne O."/>
            <person name="Tran-Gyamfi M."/>
            <person name="Aerts A."/>
            <person name="Altherr M."/>
            <person name="Ashworth L."/>
            <person name="Bajorek E."/>
            <person name="Black S."/>
            <person name="Branscomb E."/>
            <person name="Caenepeel S."/>
            <person name="Carrano A.V."/>
            <person name="Caoile C."/>
            <person name="Chan Y.M."/>
            <person name="Christensen M."/>
            <person name="Cleland C.A."/>
            <person name="Copeland A."/>
            <person name="Dalin E."/>
            <person name="Dehal P."/>
            <person name="Denys M."/>
            <person name="Detter J.C."/>
            <person name="Escobar J."/>
            <person name="Flowers D."/>
            <person name="Fotopulos D."/>
            <person name="Garcia C."/>
            <person name="Georgescu A.M."/>
            <person name="Glavina T."/>
            <person name="Gomez M."/>
            <person name="Gonzales E."/>
            <person name="Groza M."/>
            <person name="Hammon N."/>
            <person name="Hawkins T."/>
            <person name="Haydu L."/>
            <person name="Ho I."/>
            <person name="Huang W."/>
            <person name="Israni S."/>
            <person name="Jett J."/>
            <person name="Kadner K."/>
            <person name="Kimball H."/>
            <person name="Kobayashi A."/>
            <person name="Larionov V."/>
            <person name="Leem S.-H."/>
            <person name="Lopez F."/>
            <person name="Lou Y."/>
            <person name="Lowry S."/>
            <person name="Malfatti S."/>
            <person name="Martinez D."/>
            <person name="McCready P.M."/>
            <person name="Medina C."/>
            <person name="Morgan J."/>
            <person name="Nelson K."/>
            <person name="Nolan M."/>
            <person name="Ovcharenko I."/>
            <person name="Pitluck S."/>
            <person name="Pollard M."/>
            <person name="Popkie A.P."/>
            <person name="Predki P."/>
            <person name="Quan G."/>
            <person name="Ramirez L."/>
            <person name="Rash S."/>
            <person name="Retterer J."/>
            <person name="Rodriguez A."/>
            <person name="Rogers S."/>
            <person name="Salamov A."/>
            <person name="Salazar A."/>
            <person name="She X."/>
            <person name="Smith D."/>
            <person name="Slezak T."/>
            <person name="Solovyev V."/>
            <person name="Thayer N."/>
            <person name="Tice H."/>
            <person name="Tsai M."/>
            <person name="Ustaszewska A."/>
            <person name="Vo N."/>
            <person name="Wagner M."/>
            <person name="Wheeler J."/>
            <person name="Wu K."/>
            <person name="Xie G."/>
            <person name="Yang J."/>
            <person name="Dubchak I."/>
            <person name="Furey T.S."/>
            <person name="DeJong P."/>
            <person name="Dickson M."/>
            <person name="Gordon D."/>
            <person name="Eichler E.E."/>
            <person name="Pennacchio L.A."/>
            <person name="Richardson P."/>
            <person name="Stubbs L."/>
            <person name="Rokhsar D.S."/>
            <person name="Myers R.M."/>
            <person name="Rubin E.M."/>
            <person name="Lucas S.M."/>
        </authorList>
    </citation>
    <scope>NUCLEOTIDE SEQUENCE [LARGE SCALE GENOMIC DNA]</scope>
</reference>
<reference key="5">
    <citation type="journal article" date="2005" name="Exp. Cell Res.">
        <title>Sequential deposition of latent TGF-beta binding proteins (LTBPs) during formation of the extracellular matrix in human lung fibroblasts.</title>
        <authorList>
            <person name="Koli K."/>
            <person name="Hyytieainen M."/>
            <person name="Ryynanen M.J."/>
            <person name="Keski-Oja J."/>
        </authorList>
    </citation>
    <scope>SUBCELLULAR LOCATION</scope>
</reference>
<reference key="6">
    <citation type="journal article" date="2014" name="J. Proteomics">
        <title>An enzyme assisted RP-RPLC approach for in-depth analysis of human liver phosphoproteome.</title>
        <authorList>
            <person name="Bian Y."/>
            <person name="Song C."/>
            <person name="Cheng K."/>
            <person name="Dong M."/>
            <person name="Wang F."/>
            <person name="Huang J."/>
            <person name="Sun D."/>
            <person name="Wang L."/>
            <person name="Ye M."/>
            <person name="Zou H."/>
        </authorList>
    </citation>
    <scope>IDENTIFICATION BY MASS SPECTROMETRY [LARGE SCALE ANALYSIS]</scope>
    <source>
        <tissue>Liver</tissue>
    </source>
</reference>
<reference key="7">
    <citation type="journal article" date="2016" name="Matrix Biol.">
        <title>Functional consequence of fibulin-4 missense mutations associated with vascular and skeletal abnormalities and cutis laxa.</title>
        <authorList>
            <person name="Sasaki T."/>
            <person name="Hanisch F.G."/>
            <person name="Deutzmann R."/>
            <person name="Sakai L.Y."/>
            <person name="Sakuma T."/>
            <person name="Miyamoto T."/>
            <person name="Yamamoto T."/>
            <person name="Hannappel E."/>
            <person name="Chu M.L."/>
            <person name="Lanig H."/>
            <person name="von der Mark K."/>
        </authorList>
    </citation>
    <scope>INTERACTION WITH EFEMP2</scope>
</reference>
<reference key="8">
    <citation type="journal article" date="2009" name="Am. J. Hum. Genet.">
        <title>Mutations in LTBP4 cause a syndrome of impaired pulmonary, gastrointestinal, genitourinary, musculoskeletal, and dermal development.</title>
        <authorList>
            <person name="Urban Z."/>
            <person name="Hucthagowder V."/>
            <person name="Schuermann N."/>
            <person name="Todorovic V."/>
            <person name="Zilberberg L."/>
            <person name="Choi J."/>
            <person name="Sens C."/>
            <person name="Brown C.W."/>
            <person name="Clark R.D."/>
            <person name="Holland K.E."/>
            <person name="Marble M."/>
            <person name="Sakai L.Y."/>
            <person name="Dabovic B."/>
            <person name="Rifkin D.B."/>
            <person name="Davis E.C."/>
        </authorList>
    </citation>
    <scope>VARIANT URDS GLY-311</scope>
</reference>
<reference key="9">
    <citation type="journal article" date="2013" name="Ann. Neurol.">
        <title>LTBP4 genotype predicts age of ambulatory loss in Duchenne muscular dystrophy.</title>
        <authorList>
            <consortium name="United Dystrophinopathy Project"/>
            <person name="Flanigan K.M."/>
            <person name="Ceco E."/>
            <person name="Lamar K.M."/>
            <person name="Kaminoh Y."/>
            <person name="Dunn D.M."/>
            <person name="Mendell J.R."/>
            <person name="King W.M."/>
            <person name="Pestronk A."/>
            <person name="Florence J.M."/>
            <person name="Mathews K.D."/>
            <person name="Finkel R.S."/>
            <person name="Swoboda K.J."/>
            <person name="Gappmaier E."/>
            <person name="Howard M.T."/>
            <person name="Day J.W."/>
            <person name="McDonald C."/>
            <person name="McNally E.M."/>
            <person name="Weiss R.B."/>
        </authorList>
    </citation>
    <scope>VARIANTS ILE-194; ALA-787; ALA-820 AND MET-1141</scope>
    <scope>INVOLVEMENT IN DMD</scope>
</reference>
<reference key="10">
    <citation type="journal article" date="2015" name="Ann. Neurol.">
        <title>Genetic modifiers of ambulation in the Cooperative International Neuromuscular Research Group Duchenne Natural History Study.</title>
        <authorList>
            <consortium name="Cooperative International Neuromuscular Research Group Investigators"/>
            <person name="Bello L."/>
            <person name="Kesari A."/>
            <person name="Gordish-Dressman H."/>
            <person name="Cnaan A."/>
            <person name="Morgenroth L.P."/>
            <person name="Punetha J."/>
            <person name="Duong T."/>
            <person name="Henricson E.K."/>
            <person name="Pegoraro E."/>
            <person name="McDonald C.M."/>
            <person name="Hoffman E.P."/>
        </authorList>
    </citation>
    <scope>VARIANT MET-1141</scope>
    <scope>INVOLVEMENT IN DMD</scope>
</reference>
<feature type="signal peptide" evidence="2">
    <location>
        <begin position="1"/>
        <end position="27"/>
    </location>
</feature>
<feature type="chain" id="PRO_0000310964" description="Latent-transforming growth factor beta-binding protein 4">
    <location>
        <begin position="28"/>
        <end position="1624"/>
    </location>
</feature>
<feature type="domain" description="EGF-like 1" evidence="3">
    <location>
        <begin position="149"/>
        <end position="181"/>
    </location>
</feature>
<feature type="domain" description="TB 1" evidence="4">
    <location>
        <begin position="287"/>
        <end position="339"/>
    </location>
</feature>
<feature type="domain" description="EGF-like 2; calcium-binding" evidence="3">
    <location>
        <begin position="357"/>
        <end position="397"/>
    </location>
</feature>
<feature type="domain" description="TB 2" evidence="4">
    <location>
        <begin position="407"/>
        <end position="459"/>
    </location>
</feature>
<feature type="domain" description="EGF-like 3" evidence="3">
    <location>
        <begin position="545"/>
        <end position="586"/>
    </location>
</feature>
<feature type="domain" description="EGF-like 4; calcium-binding" evidence="3">
    <location>
        <begin position="587"/>
        <end position="628"/>
    </location>
</feature>
<feature type="domain" description="EGF-like 5; calcium-binding" evidence="3">
    <location>
        <begin position="629"/>
        <end position="670"/>
    </location>
</feature>
<feature type="domain" description="EGF-like 6; calcium-binding" evidence="3">
    <location>
        <begin position="671"/>
        <end position="708"/>
    </location>
</feature>
<feature type="domain" description="EGF-like 7; calcium-binding" evidence="3">
    <location>
        <begin position="710"/>
        <end position="751"/>
    </location>
</feature>
<feature type="domain" description="EGF-like 8; calcium-binding" evidence="3">
    <location>
        <begin position="752"/>
        <end position="793"/>
    </location>
</feature>
<feature type="domain" description="EGF-like 9; calcium-binding" evidence="3">
    <location>
        <begin position="834"/>
        <end position="877"/>
    </location>
</feature>
<feature type="domain" description="EGF-like 10; calcium-binding" evidence="3">
    <location>
        <begin position="878"/>
        <end position="919"/>
    </location>
</feature>
<feature type="domain" description="EGF-like 11; calcium-binding" evidence="3">
    <location>
        <begin position="920"/>
        <end position="960"/>
    </location>
</feature>
<feature type="domain" description="EGF-like 12; calcium-binding" evidence="3">
    <location>
        <begin position="1049"/>
        <end position="1090"/>
    </location>
</feature>
<feature type="domain" description="TB 3" evidence="4">
    <location>
        <begin position="1181"/>
        <end position="1235"/>
    </location>
</feature>
<feature type="domain" description="EGF-like 13; calcium-binding" evidence="3">
    <location>
        <begin position="1253"/>
        <end position="1295"/>
    </location>
</feature>
<feature type="domain" description="EGF-like 14; calcium-binding" evidence="3">
    <location>
        <begin position="1296"/>
        <end position="1337"/>
    </location>
</feature>
<feature type="domain" description="TB 4" evidence="4">
    <location>
        <begin position="1349"/>
        <end position="1402"/>
    </location>
</feature>
<feature type="domain" description="EGF-like 15" evidence="3">
    <location>
        <begin position="1533"/>
        <end position="1573"/>
    </location>
</feature>
<feature type="domain" description="EGF-like 16" evidence="3">
    <location>
        <begin position="1574"/>
        <end position="1618"/>
    </location>
</feature>
<feature type="region of interest" description="Disordered" evidence="5">
    <location>
        <begin position="125"/>
        <end position="146"/>
    </location>
</feature>
<feature type="region of interest" description="Disordered" evidence="5">
    <location>
        <begin position="474"/>
        <end position="546"/>
    </location>
</feature>
<feature type="region of interest" description="Disordered" evidence="5">
    <location>
        <begin position="1130"/>
        <end position="1179"/>
    </location>
</feature>
<feature type="region of interest" description="Disordered" evidence="5">
    <location>
        <begin position="1446"/>
        <end position="1524"/>
    </location>
</feature>
<feature type="compositionally biased region" description="Polar residues" evidence="5">
    <location>
        <begin position="487"/>
        <end position="500"/>
    </location>
</feature>
<feature type="compositionally biased region" description="Basic and acidic residues" evidence="5">
    <location>
        <begin position="508"/>
        <end position="522"/>
    </location>
</feature>
<feature type="compositionally biased region" description="Polar residues" evidence="5">
    <location>
        <begin position="1138"/>
        <end position="1149"/>
    </location>
</feature>
<feature type="compositionally biased region" description="Pro residues" evidence="5">
    <location>
        <begin position="1156"/>
        <end position="1168"/>
    </location>
</feature>
<feature type="compositionally biased region" description="Pro residues" evidence="5">
    <location>
        <begin position="1446"/>
        <end position="1458"/>
    </location>
</feature>
<feature type="compositionally biased region" description="Basic and acidic residues" evidence="5">
    <location>
        <begin position="1501"/>
        <end position="1510"/>
    </location>
</feature>
<feature type="glycosylation site" description="N-linked (GlcNAc...) asparagine" evidence="2">
    <location>
        <position position="352"/>
    </location>
</feature>
<feature type="glycosylation site" description="N-linked (GlcNAc...) asparagine" evidence="2">
    <location>
        <position position="425"/>
    </location>
</feature>
<feature type="glycosylation site" description="N-linked (GlcNAc...) asparagine" evidence="2">
    <location>
        <position position="1055"/>
    </location>
</feature>
<feature type="glycosylation site" description="N-linked (GlcNAc...) asparagine" evidence="2">
    <location>
        <position position="1200"/>
    </location>
</feature>
<feature type="glycosylation site" description="N-linked (GlcNAc...) asparagine" evidence="2">
    <location>
        <position position="1339"/>
    </location>
</feature>
<feature type="disulfide bond" evidence="3">
    <location>
        <begin position="153"/>
        <end position="163"/>
    </location>
</feature>
<feature type="disulfide bond" evidence="3">
    <location>
        <begin position="157"/>
        <end position="169"/>
    </location>
</feature>
<feature type="disulfide bond" evidence="3">
    <location>
        <begin position="171"/>
        <end position="180"/>
    </location>
</feature>
<feature type="disulfide bond" evidence="4">
    <location>
        <begin position="289"/>
        <end position="311"/>
    </location>
</feature>
<feature type="disulfide bond" evidence="4">
    <location>
        <begin position="298"/>
        <end position="324"/>
    </location>
</feature>
<feature type="disulfide bond" evidence="4">
    <location>
        <begin position="312"/>
        <end position="327"/>
    </location>
</feature>
<feature type="disulfide bond" evidence="3">
    <location>
        <begin position="361"/>
        <end position="372"/>
    </location>
</feature>
<feature type="disulfide bond" evidence="3">
    <location>
        <begin position="367"/>
        <end position="381"/>
    </location>
</feature>
<feature type="disulfide bond" evidence="3">
    <location>
        <begin position="383"/>
        <end position="396"/>
    </location>
</feature>
<feature type="disulfide bond" evidence="4">
    <location>
        <begin position="409"/>
        <end position="431"/>
    </location>
</feature>
<feature type="disulfide bond" evidence="4">
    <location>
        <begin position="418"/>
        <end position="444"/>
    </location>
</feature>
<feature type="disulfide bond" evidence="4">
    <location>
        <begin position="432"/>
        <end position="447"/>
    </location>
</feature>
<feature type="disulfide bond" evidence="4">
    <location>
        <begin position="433"/>
        <end position="459"/>
    </location>
</feature>
<feature type="disulfide bond" evidence="3">
    <location>
        <begin position="549"/>
        <end position="561"/>
    </location>
</feature>
<feature type="disulfide bond" evidence="3">
    <location>
        <begin position="556"/>
        <end position="570"/>
    </location>
</feature>
<feature type="disulfide bond" evidence="3">
    <location>
        <begin position="572"/>
        <end position="585"/>
    </location>
</feature>
<feature type="disulfide bond" evidence="3">
    <location>
        <begin position="591"/>
        <end position="603"/>
    </location>
</feature>
<feature type="disulfide bond" evidence="3">
    <location>
        <begin position="598"/>
        <end position="612"/>
    </location>
</feature>
<feature type="disulfide bond" evidence="3">
    <location>
        <begin position="614"/>
        <end position="627"/>
    </location>
</feature>
<feature type="disulfide bond" evidence="3">
    <location>
        <begin position="633"/>
        <end position="645"/>
    </location>
</feature>
<feature type="disulfide bond" evidence="3">
    <location>
        <begin position="640"/>
        <end position="654"/>
    </location>
</feature>
<feature type="disulfide bond" evidence="3">
    <location>
        <begin position="656"/>
        <end position="669"/>
    </location>
</feature>
<feature type="disulfide bond" evidence="3">
    <location>
        <begin position="675"/>
        <end position="687"/>
    </location>
</feature>
<feature type="disulfide bond" evidence="3">
    <location>
        <begin position="682"/>
        <end position="696"/>
    </location>
</feature>
<feature type="disulfide bond" evidence="3">
    <location>
        <begin position="698"/>
        <end position="707"/>
    </location>
</feature>
<feature type="disulfide bond" evidence="3">
    <location>
        <begin position="714"/>
        <end position="726"/>
    </location>
</feature>
<feature type="disulfide bond" evidence="3">
    <location>
        <begin position="721"/>
        <end position="735"/>
    </location>
</feature>
<feature type="disulfide bond" evidence="3">
    <location>
        <begin position="737"/>
        <end position="750"/>
    </location>
</feature>
<feature type="disulfide bond" evidence="3">
    <location>
        <begin position="756"/>
        <end position="768"/>
    </location>
</feature>
<feature type="disulfide bond" evidence="3">
    <location>
        <begin position="763"/>
        <end position="777"/>
    </location>
</feature>
<feature type="disulfide bond" evidence="3">
    <location>
        <begin position="779"/>
        <end position="792"/>
    </location>
</feature>
<feature type="disulfide bond" evidence="3">
    <location>
        <begin position="838"/>
        <end position="851"/>
    </location>
</feature>
<feature type="disulfide bond" evidence="3">
    <location>
        <begin position="845"/>
        <end position="860"/>
    </location>
</feature>
<feature type="disulfide bond" evidence="3">
    <location>
        <begin position="862"/>
        <end position="876"/>
    </location>
</feature>
<feature type="disulfide bond" evidence="3">
    <location>
        <begin position="882"/>
        <end position="894"/>
    </location>
</feature>
<feature type="disulfide bond" evidence="3">
    <location>
        <begin position="888"/>
        <end position="903"/>
    </location>
</feature>
<feature type="disulfide bond" evidence="3">
    <location>
        <begin position="905"/>
        <end position="918"/>
    </location>
</feature>
<feature type="disulfide bond" evidence="3">
    <location>
        <begin position="924"/>
        <end position="935"/>
    </location>
</feature>
<feature type="disulfide bond" evidence="3">
    <location>
        <begin position="930"/>
        <end position="944"/>
    </location>
</feature>
<feature type="disulfide bond" evidence="3">
    <location>
        <begin position="946"/>
        <end position="959"/>
    </location>
</feature>
<feature type="disulfide bond" evidence="3">
    <location>
        <begin position="1053"/>
        <end position="1065"/>
    </location>
</feature>
<feature type="disulfide bond" evidence="3">
    <location>
        <begin position="1059"/>
        <end position="1074"/>
    </location>
</feature>
<feature type="disulfide bond" evidence="3">
    <location>
        <begin position="1076"/>
        <end position="1089"/>
    </location>
</feature>
<feature type="disulfide bond" evidence="4">
    <location>
        <begin position="1183"/>
        <end position="1206"/>
    </location>
</feature>
<feature type="disulfide bond" evidence="4">
    <location>
        <begin position="1193"/>
        <end position="1218"/>
    </location>
</feature>
<feature type="disulfide bond" description="Interchain (with C-33 in TGFB1); in linked form" evidence="1">
    <location>
        <position position="1193"/>
    </location>
</feature>
<feature type="disulfide bond" evidence="4">
    <location>
        <begin position="1207"/>
        <end position="1223"/>
    </location>
</feature>
<feature type="disulfide bond" evidence="4">
    <location>
        <begin position="1208"/>
        <end position="1235"/>
    </location>
</feature>
<feature type="disulfide bond" description="Interchain (with C-33 in TGFB1); in linked form" evidence="1">
    <location>
        <position position="1218"/>
    </location>
</feature>
<feature type="disulfide bond" evidence="3">
    <location>
        <begin position="1257"/>
        <end position="1270"/>
    </location>
</feature>
<feature type="disulfide bond" evidence="3">
    <location>
        <begin position="1265"/>
        <end position="1279"/>
    </location>
</feature>
<feature type="disulfide bond" evidence="3">
    <location>
        <begin position="1281"/>
        <end position="1294"/>
    </location>
</feature>
<feature type="disulfide bond" evidence="3">
    <location>
        <begin position="1300"/>
        <end position="1312"/>
    </location>
</feature>
<feature type="disulfide bond" evidence="3">
    <location>
        <begin position="1307"/>
        <end position="1321"/>
    </location>
</feature>
<feature type="disulfide bond" evidence="3">
    <location>
        <begin position="1323"/>
        <end position="1336"/>
    </location>
</feature>
<feature type="disulfide bond" evidence="4">
    <location>
        <begin position="1351"/>
        <end position="1375"/>
    </location>
</feature>
<feature type="disulfide bond" evidence="4">
    <location>
        <begin position="1361"/>
        <end position="1387"/>
    </location>
</feature>
<feature type="disulfide bond" evidence="4">
    <location>
        <begin position="1376"/>
        <end position="1390"/>
    </location>
</feature>
<feature type="disulfide bond" evidence="4">
    <location>
        <begin position="1377"/>
        <end position="1402"/>
    </location>
</feature>
<feature type="disulfide bond" evidence="3">
    <location>
        <begin position="1537"/>
        <end position="1548"/>
    </location>
</feature>
<feature type="disulfide bond" evidence="3">
    <location>
        <begin position="1543"/>
        <end position="1557"/>
    </location>
</feature>
<feature type="disulfide bond" evidence="3">
    <location>
        <begin position="1559"/>
        <end position="1572"/>
    </location>
</feature>
<feature type="disulfide bond" evidence="3">
    <location>
        <begin position="1578"/>
        <end position="1593"/>
    </location>
</feature>
<feature type="disulfide bond" evidence="3">
    <location>
        <begin position="1588"/>
        <end position="1602"/>
    </location>
</feature>
<feature type="disulfide bond" evidence="3">
    <location>
        <begin position="1604"/>
        <end position="1617"/>
    </location>
</feature>
<feature type="splice variant" id="VSP_029362" description="In isoform 4." evidence="13">
    <location>
        <begin position="1"/>
        <end position="902"/>
    </location>
</feature>
<feature type="splice variant" id="VSP_029363" description="In isoform 3." evidence="14">
    <original>MPRPGTSGRRPLLLVLLLPLFAAATSAASPSPSPSQVVEVPGVPSRPASVAVCRCCPGQTSRRSRCIR</original>
    <variation>MGDVKALLFVVAARARRLGGAAASESLAVSE</variation>
    <location>
        <begin position="1"/>
        <end position="68"/>
    </location>
</feature>
<feature type="splice variant" id="VSP_029364" description="In isoform 2." evidence="15">
    <location>
        <begin position="1"/>
        <end position="67"/>
    </location>
</feature>
<feature type="splice variant" id="VSP_029365" description="In isoform 2." evidence="15">
    <original>RAFCRVRSCQPKKCAGPQRCLNPVPAVPSPSPSVRKRQVSLNWQPLTLQEARALLKRRRPRGPGGRGLLRRRPPQRAPAGKAPV</original>
    <variation>MAGGVRLLWVSLLVLLAQLGPQPGLGRLGERLRVRFTPVVCGLRCVHGPTGSRCTPTCAPRNATSVDSGAPGGAAPGGPGFRAF</variation>
    <location>
        <begin position="68"/>
        <end position="151"/>
    </location>
</feature>
<feature type="splice variant" id="VSP_029366" description="In isoform 4." evidence="13">
    <original>CTCAPGYRPGPRGASCL</original>
    <variation>MLGGAGGGPGLRTPCPA</variation>
    <location>
        <begin position="903"/>
        <end position="919"/>
    </location>
</feature>
<feature type="splice variant" id="VSP_029367" description="In isoform 4." evidence="13">
    <location>
        <begin position="1007"/>
        <end position="1092"/>
    </location>
</feature>
<feature type="sequence variant" id="VAR_037119" description="In dbSNP:rs2303729." evidence="8 12">
    <original>V</original>
    <variation>I</variation>
    <location>
        <position position="194"/>
    </location>
</feature>
<feature type="sequence variant" id="VAR_064153" description="In URDS; dbSNP:rs267607229." evidence="7">
    <original>C</original>
    <variation>G</variation>
    <location>
        <position position="311"/>
    </location>
</feature>
<feature type="sequence variant" id="VAR_037120" description="In dbSNP:rs33937741.">
    <original>R</original>
    <variation>G</variation>
    <location>
        <position position="635"/>
    </location>
</feature>
<feature type="sequence variant" id="VAR_037121" description="In dbSNP:rs34299942.">
    <original>P</original>
    <variation>A</variation>
    <location>
        <position position="679"/>
    </location>
</feature>
<feature type="sequence variant" id="VAR_037122" description="In dbSNP:rs1131620." evidence="8 12">
    <original>T</original>
    <variation>A</variation>
    <location>
        <position position="787"/>
    </location>
</feature>
<feature type="sequence variant" id="VAR_037123" description="In dbSNP:rs1051303." evidence="8 12">
    <original>T</original>
    <variation>A</variation>
    <location>
        <position position="820"/>
    </location>
</feature>
<feature type="sequence variant" id="VAR_037124" description="In dbSNP:rs10880." evidence="8 11 12">
    <original>T</original>
    <variation>M</variation>
    <location>
        <position position="1141"/>
    </location>
</feature>
<feature type="sequence conflict" description="In Ref. 1; CAA73944." evidence="16" ref="1">
    <original>L</original>
    <variation>F</variation>
    <location>
        <position position="170"/>
    </location>
</feature>
<feature type="sequence conflict" description="In Ref. 3; BAC11024." evidence="16" ref="3">
    <original>T</original>
    <variation>A</variation>
    <location>
        <position position="346"/>
    </location>
</feature>
<feature type="sequence conflict" description="In Ref. 2; AAC39879/AAC39880." evidence="16" ref="2">
    <original>L</original>
    <variation>F</variation>
    <location>
        <position position="526"/>
    </location>
</feature>
<feature type="sequence conflict" description="In Ref. 1; CAA73944." evidence="16" ref="1">
    <original>A</original>
    <variation>G</variation>
    <location>
        <position position="686"/>
    </location>
</feature>
<feature type="sequence conflict" description="In Ref. 3; BAC11024." evidence="16" ref="3">
    <original>G</original>
    <variation>R</variation>
    <location>
        <position position="974"/>
    </location>
</feature>
<feature type="sequence conflict" description="In Ref. 1; CAA73944." evidence="16" ref="1">
    <original>A</original>
    <variation>V</variation>
    <location>
        <position position="1139"/>
    </location>
</feature>
<feature type="sequence conflict" description="In Ref. 1; CAA73944." evidence="16" ref="1">
    <original>F</original>
    <variation>S</variation>
    <location>
        <position position="1142"/>
    </location>
</feature>
<feature type="sequence conflict" description="In Ref. 1; CAA73944." evidence="16" ref="1">
    <original>A</original>
    <variation>V</variation>
    <location>
        <position position="1151"/>
    </location>
</feature>
<feature type="sequence conflict" description="In Ref. 1; CAA73944." evidence="16" ref="1">
    <original>P</original>
    <variation>S</variation>
    <location>
        <position position="1165"/>
    </location>
</feature>
<feature type="sequence conflict" description="In Ref. 1; CAA73944." evidence="16" ref="1">
    <original>ST</original>
    <variation>RK</variation>
    <location>
        <begin position="1169"/>
        <end position="1170"/>
    </location>
</feature>
<feature type="sequence conflict" description="In Ref. 1; CAA73944." evidence="16" ref="1">
    <original>Q</original>
    <variation>K</variation>
    <location>
        <position position="1173"/>
    </location>
</feature>
<feature type="sequence conflict" description="In Ref. 1; CAA73944." evidence="16" ref="1">
    <original>R</original>
    <variation>C</variation>
    <location>
        <position position="1180"/>
    </location>
</feature>
<feature type="sequence conflict" description="In Ref. 3; BAC11024." evidence="16" ref="3">
    <original>C</original>
    <variation>R</variation>
    <location>
        <position position="1402"/>
    </location>
</feature>
<feature type="sequence conflict" description="In Ref. 3; BAC11024." evidence="16" ref="3">
    <original>P</original>
    <variation>S</variation>
    <location>
        <position position="1512"/>
    </location>
</feature>
<feature type="sequence conflict" description="In Ref. 1; CAA73944." evidence="16" ref="1">
    <original>G</original>
    <variation>D</variation>
    <location>
        <position position="1546"/>
    </location>
</feature>
<proteinExistence type="evidence at protein level"/>
<sequence length="1624" mass="173435">MPRPGTSGRRPLLLVLLLPLFAAATSAASPSPSPSQVVEVPGVPSRPASVAVCRCCPGQTSRRSRCIRAFCRVRSCQPKKCAGPQRCLNPVPAVPSPSPSVRKRQVSLNWQPLTLQEARALLKRRRPRGPGGRGLLRRRPPQRAPAGKAPVLCPLICHNGGVCVKPDRCLCPPDFAGKFCQLHSSGARPPAPAVPGLTRSVYTMPLANHRDDEHGVASMVSVHVEHPQEASVVVHQVERVSGPWEEADAEAVARAEAAARAEAAAPYTVLAQSAPREDGYSDASGFGYCFRELRGGECASPLPGLRTQEVCCRGAGLAWGVHDCQLCSERLGNSERVSAPDGPCPTGFERVNGSCEDVDECATGGRCQHGECANTRGGYTCVCPDGFLLDSSRSSCISQHVISEAKGPCFRVLRDGGCSLPILRNITKQICCCSRVGKAWGRGCQLCPPFGSEGFREICPAGPGYHYSASDLRYNTRPLGQEPPRVSLSQPRTLPATSRPSAGFLPTHRLEPRPEPRPDPRPGPELPLPSIPAWTGPEIPESGPSSGMCQRNPQVCGPGRCISRPSGYTCACDSGFRLSPQGTRCIDVDECRRVPPPCAPGRCENSPGSFRCVCGPGFRAGPRAAECLDVDECHRVPPPCDLGRCENTPGSFLCVCPAGYQAAPHGASCQDVDECTQSPGLCGRGACKNLPGSFRCVCPAGFRGSACEEDVDECAQEPPPCGPGRCDNTAGSFHCACPAGFRSRGPGAPCQDVDECARSPPPCTYGRCENTEGSFQCVCPMGFQPNTAGSECEDVDECENHLACPGQECVNSPGSFQCRTCPSGHHLHRGRCTDVDECSSGAPPCGPHGHCTNTEGSFRCSCAPGYRAPSGRPGPCADVNECLEGDFCFPHGECLNTDGSFACTCAPGYRPGPRGASCLDVDECSEEDLCQSGICTNTDGSFECICPPGHRAGPDLASCLDVDECRERGPALCGSQRCENSPGSYRCVRDCDPGYHAGPEGTCDDVDECQEYGPEICGAQRCENTPGSYRCTPACDPGYQPTPGGGCQDVDECRNRSFCGAHAVCQNLPGSFQCLCDQGYEGARDGRHCVDVNECETLQGVCGAALCENVEGSFLCVCPNSPEEFDPMTGRCVPPRTSAGTFPGSQPQAPASPVLPARPPPPPLPRRPSTPRQGPVGSGRRECYFDTAAPDACDNILARNVTWQECCCTVGEGWGSGCRIQQCPGTETAEYQSLCPHGRGYLAPSGDLSLRRDVDECQLFRDQVCKSGVCVNTAPGYSCYCSNGYYYHTQRLECIDNDECADEEPACEGGRCVNTVGSYHCTCEPPLVLDGSQRRCVSNESQSLDDNLGVCWQEVGADLVCSHPRLDRQATYTECCCLYGEAWGMDCALCPAQDSDDFEALCNVLRPPAYSPPRPGGFGLPYEYGPDLGPPYQGLPYGPELYPPPALPYDPYPPPPGPFARREAPYGAPRFDMPDFEDDGGPYGESEAPAPPGPGTRWPYRSRDTRRSFPEPEEPPEGGSYAGSLAEPYEELEAEECGILDGCTNGRCVRVPEGFTCRCFDGYRLDMTRMACVDINECDEAEAASPLCVNARCLNTDGSFRCICRPGFAPTHQPHHCAPARPRA</sequence>
<evidence type="ECO:0000250" key="1">
    <source>
        <dbReference type="UniProtKB" id="Q14766"/>
    </source>
</evidence>
<evidence type="ECO:0000255" key="2"/>
<evidence type="ECO:0000255" key="3">
    <source>
        <dbReference type="PROSITE-ProRule" id="PRU00076"/>
    </source>
</evidence>
<evidence type="ECO:0000255" key="4">
    <source>
        <dbReference type="PROSITE-ProRule" id="PRU00697"/>
    </source>
</evidence>
<evidence type="ECO:0000256" key="5">
    <source>
        <dbReference type="SAM" id="MobiDB-lite"/>
    </source>
</evidence>
<evidence type="ECO:0000269" key="6">
    <source>
    </source>
</evidence>
<evidence type="ECO:0000269" key="7">
    <source>
    </source>
</evidence>
<evidence type="ECO:0000269" key="8">
    <source>
    </source>
</evidence>
<evidence type="ECO:0000269" key="9">
    <source>
    </source>
</evidence>
<evidence type="ECO:0000269" key="10">
    <source>
    </source>
</evidence>
<evidence type="ECO:0000269" key="11">
    <source>
    </source>
</evidence>
<evidence type="ECO:0000269" key="12">
    <source>
    </source>
</evidence>
<evidence type="ECO:0000303" key="13">
    <source>
    </source>
</evidence>
<evidence type="ECO:0000303" key="14">
    <source>
    </source>
</evidence>
<evidence type="ECO:0000303" key="15">
    <source>
    </source>
</evidence>
<evidence type="ECO:0000305" key="16"/>
<organism>
    <name type="scientific">Homo sapiens</name>
    <name type="common">Human</name>
    <dbReference type="NCBI Taxonomy" id="9606"/>
    <lineage>
        <taxon>Eukaryota</taxon>
        <taxon>Metazoa</taxon>
        <taxon>Chordata</taxon>
        <taxon>Craniata</taxon>
        <taxon>Vertebrata</taxon>
        <taxon>Euteleostomi</taxon>
        <taxon>Mammalia</taxon>
        <taxon>Eutheria</taxon>
        <taxon>Euarchontoglires</taxon>
        <taxon>Primates</taxon>
        <taxon>Haplorrhini</taxon>
        <taxon>Catarrhini</taxon>
        <taxon>Hominidae</taxon>
        <taxon>Homo</taxon>
    </lineage>
</organism>
<gene>
    <name type="primary">LTBP4</name>
</gene>